<organism>
    <name type="scientific">Cyprinus carpio</name>
    <name type="common">Common carp</name>
    <dbReference type="NCBI Taxonomy" id="7962"/>
    <lineage>
        <taxon>Eukaryota</taxon>
        <taxon>Metazoa</taxon>
        <taxon>Chordata</taxon>
        <taxon>Craniata</taxon>
        <taxon>Vertebrata</taxon>
        <taxon>Euteleostomi</taxon>
        <taxon>Actinopterygii</taxon>
        <taxon>Neopterygii</taxon>
        <taxon>Teleostei</taxon>
        <taxon>Ostariophysi</taxon>
        <taxon>Cypriniformes</taxon>
        <taxon>Cyprinidae</taxon>
        <taxon>Cyprininae</taxon>
        <taxon>Cyprinus</taxon>
    </lineage>
</organism>
<proteinExistence type="evidence at protein level"/>
<name>UTS2A_CYPCA</name>
<evidence type="ECO:0000255" key="1"/>
<evidence type="ECO:0000305" key="2"/>
<dbReference type="EMBL" id="M14084">
    <property type="protein sequence ID" value="AAA49215.1"/>
    <property type="molecule type" value="mRNA"/>
</dbReference>
<dbReference type="PIR" id="I50498">
    <property type="entry name" value="I50498"/>
</dbReference>
<dbReference type="Proteomes" id="UP000694384">
    <property type="component" value="Unplaced"/>
</dbReference>
<dbReference type="Proteomes" id="UP000694427">
    <property type="component" value="Unplaced"/>
</dbReference>
<dbReference type="Proteomes" id="UP000694700">
    <property type="component" value="Unplaced"/>
</dbReference>
<dbReference type="Proteomes" id="UP000694701">
    <property type="component" value="Unplaced"/>
</dbReference>
<dbReference type="Proteomes" id="UP001155660">
    <property type="component" value="Unplaced"/>
</dbReference>
<dbReference type="GO" id="GO:0005576">
    <property type="term" value="C:extracellular region"/>
    <property type="evidence" value="ECO:0007669"/>
    <property type="project" value="UniProtKB-SubCell"/>
</dbReference>
<dbReference type="GO" id="GO:0005179">
    <property type="term" value="F:hormone activity"/>
    <property type="evidence" value="ECO:0007669"/>
    <property type="project" value="UniProtKB-KW"/>
</dbReference>
<dbReference type="GO" id="GO:0097746">
    <property type="term" value="P:blood vessel diameter maintenance"/>
    <property type="evidence" value="ECO:0007669"/>
    <property type="project" value="InterPro"/>
</dbReference>
<dbReference type="GO" id="GO:0008217">
    <property type="term" value="P:regulation of blood pressure"/>
    <property type="evidence" value="ECO:0007669"/>
    <property type="project" value="InterPro"/>
</dbReference>
<dbReference type="InterPro" id="IPR001483">
    <property type="entry name" value="Urotensin_II"/>
</dbReference>
<dbReference type="PANTHER" id="PTHR14447">
    <property type="entry name" value="UROTENSIN 2"/>
    <property type="match status" value="1"/>
</dbReference>
<dbReference type="PANTHER" id="PTHR14447:SF0">
    <property type="entry name" value="UROTENSIN-2"/>
    <property type="match status" value="1"/>
</dbReference>
<dbReference type="Pfam" id="PF02083">
    <property type="entry name" value="Urotensin_II"/>
    <property type="match status" value="1"/>
</dbReference>
<dbReference type="PROSITE" id="PS00984">
    <property type="entry name" value="UROTENSIN_II"/>
    <property type="match status" value="1"/>
</dbReference>
<sequence length="125" mass="13840">MMCNLLLSFSVLLLSCTHLVAHPVTDTADMTYSGPDSVEEAGGVSPDDFAVSDLNDLLQRAAVVEYSPLLSRENIKVPGQIPKEALRELLLEKPYRLIPPSGLWGSRRQFRKRGGGADCFWKYCV</sequence>
<keyword id="KW-0165">Cleavage on pair of basic residues</keyword>
<keyword id="KW-0903">Direct protein sequencing</keyword>
<keyword id="KW-1015">Disulfide bond</keyword>
<keyword id="KW-0372">Hormone</keyword>
<keyword id="KW-1185">Reference proteome</keyword>
<keyword id="KW-0964">Secreted</keyword>
<keyword id="KW-0732">Signal</keyword>
<comment type="function">
    <text>Urotensin is found in the teleost caudal neurosecretory system. It has a suggested role in osmoregulation and as a corticotropin-releasing factor. The non-hormonal portion of this precursor may be a urotensin binding protein, urophysin.</text>
</comment>
<comment type="subcellular location">
    <subcellularLocation>
        <location>Secreted</location>
    </subcellularLocation>
</comment>
<comment type="similarity">
    <text evidence="2">Belongs to the urotensin-2 family.</text>
</comment>
<feature type="signal peptide">
    <location>
        <begin position="1"/>
        <end position="21"/>
    </location>
</feature>
<feature type="chain" id="PRO_0000036335" description="Urophysin alpha" evidence="1">
    <location>
        <begin position="22"/>
        <end position="106"/>
    </location>
</feature>
<feature type="propeptide" id="PRO_0000036336" evidence="1">
    <location>
        <begin position="109"/>
        <end position="111"/>
    </location>
</feature>
<feature type="peptide" id="PRO_0000036337" description="Urotensin II-alpha">
    <location>
        <begin position="114"/>
        <end position="125"/>
    </location>
</feature>
<feature type="disulfide bond">
    <location>
        <begin position="119"/>
        <end position="124"/>
    </location>
</feature>
<reference key="1">
    <citation type="journal article" date="1986" name="J. Neurosci.">
        <title>Cloning and sequence analysis of cDNAs encoding precursors of urotensin II-alpha and -gamma.</title>
        <authorList>
            <person name="Ohsako S."/>
            <person name="Ishida I."/>
            <person name="Ichikawa T."/>
            <person name="Deguchi T."/>
        </authorList>
    </citation>
    <scope>NUCLEOTIDE SEQUENCE [MRNA]</scope>
</reference>
<reference key="2">
    <citation type="book" date="1981" name="Proceedings of the 7th American peptide symposium">
        <editorList>
            <person name="Rich D.H."/>
            <person name="Gross E."/>
        </editorList>
        <authorList>
            <person name="Munekata E."/>
            <person name="Ohtaki T."/>
            <person name="Ichikawa T."/>
            <person name="McMaster D."/>
            <person name="Lederis K."/>
        </authorList>
    </citation>
    <scope>PROTEIN SEQUENCE OF 114-125</scope>
</reference>
<accession>P04560</accession>
<protein>
    <recommendedName>
        <fullName>Prepro-urotensin II-alpha</fullName>
    </recommendedName>
    <component>
        <recommendedName>
            <fullName>Urophysin alpha</fullName>
        </recommendedName>
    </component>
    <component>
        <recommendedName>
            <fullName>Urotensin II-alpha</fullName>
            <shortName>U-II-alpha</shortName>
            <shortName>UII-alpha</shortName>
        </recommendedName>
    </component>
</protein>